<sequence>MSKLRKKYLEHLLCVLIFFTYVIGYGEAQSKSFLVDCGSNATTEVDGRTWVGDLSPNKSVTLQGFDAITASTSKGSSVYAEIYKTARVFDAVLNYTFEGITQGNYFVRLHFSPFAIENHNVNESSFSVFADGLRLMLDINIAGEIAHKNLILESTGHNATASSLVKEFLLPTGPGKLVLSFIPEKGSFGFVNAIEIVSVDDKLFKESVTKVGGSEVELGLGGRGIETMYRLNVGGPKLGPSKDLKLYRTWETDLSYMVIENAGVEVKNSSNITYALADDSPVAPLLVYETARMMSNTEVLEKRFNISWKFEVDPNFDYLVRLHFCELLVDKQNQRIFRIYINNQTAAGNFDIFAHAGGKNKGIYQDYLDPVSSKNDVLWIQLGPDSSVGASGDALLSGLEIFKLSKNGNLAHLIRFDSTGHSVSDSKMRIIWISVGAGIAIIIFFVFLGILVVCLCKKRRSKSDESKNNPPGWRPLFLHVNNSTANAKATGGSLRLNTLAASTMGRKFTLAEIRAATKNFDDGLAIGVGGFGKVYRGELEDGTLIAIKRATPHSQQGLAEFETEIVMLSRLRHRHLVSLIGFCDEHNEMILVYEYMANGTLRSHLFGSNLPPLSWKQRLEACIGSARGLHYLHTGSERGIIHRDVKTTNILLDENFVAKMSDFGLSKAGPSMDHTHVSTAVKGSFGYLDPEYFRRQQLTEKSDVYSFGVVLFEAVCARAVINPTLPKDQINLAEWALSWQKQRNLESIIDSNLRGNYSPESLEKYGEIAEKCLADEGKNRPMMGEVLWSLEYVLQIHEAWLRKQNGENSFSSSQAVEEAPESFTLPACSNQDSSETEQSQTGSALHNSA</sequence>
<keyword id="KW-0067">ATP-binding</keyword>
<keyword id="KW-1003">Cell membrane</keyword>
<keyword id="KW-0325">Glycoprotein</keyword>
<keyword id="KW-0418">Kinase</keyword>
<keyword id="KW-0472">Membrane</keyword>
<keyword id="KW-0547">Nucleotide-binding</keyword>
<keyword id="KW-1185">Reference proteome</keyword>
<keyword id="KW-0723">Serine/threonine-protein kinase</keyword>
<keyword id="KW-0732">Signal</keyword>
<keyword id="KW-0808">Transferase</keyword>
<keyword id="KW-0812">Transmembrane</keyword>
<keyword id="KW-1133">Transmembrane helix</keyword>
<name>Y1357_ARATH</name>
<evidence type="ECO:0000250" key="1"/>
<evidence type="ECO:0000255" key="2"/>
<evidence type="ECO:0000255" key="3">
    <source>
        <dbReference type="PROSITE-ProRule" id="PRU00159"/>
    </source>
</evidence>
<evidence type="ECO:0000255" key="4">
    <source>
        <dbReference type="PROSITE-ProRule" id="PRU10027"/>
    </source>
</evidence>
<evidence type="ECO:0000256" key="5">
    <source>
        <dbReference type="SAM" id="MobiDB-lite"/>
    </source>
</evidence>
<dbReference type="EC" id="2.7.11.-"/>
<dbReference type="EMBL" id="AC007060">
    <property type="protein sequence ID" value="AAD25744.1"/>
    <property type="molecule type" value="Genomic_DNA"/>
</dbReference>
<dbReference type="EMBL" id="CP002684">
    <property type="protein sequence ID" value="AEE31245.1"/>
    <property type="molecule type" value="Genomic_DNA"/>
</dbReference>
<dbReference type="PIR" id="H86430">
    <property type="entry name" value="H86430"/>
</dbReference>
<dbReference type="RefSeq" id="NP_174345.1">
    <property type="nucleotide sequence ID" value="NM_102794.2"/>
</dbReference>
<dbReference type="SMR" id="Q9SA72"/>
<dbReference type="FunCoup" id="Q9SA72">
    <property type="interactions" value="669"/>
</dbReference>
<dbReference type="STRING" id="3702.Q9SA72"/>
<dbReference type="GlyGen" id="Q9SA72">
    <property type="glycosylation" value="9 sites"/>
</dbReference>
<dbReference type="iPTMnet" id="Q9SA72"/>
<dbReference type="SwissPalm" id="Q9SA72"/>
<dbReference type="PaxDb" id="3702-AT1G30570.1"/>
<dbReference type="ProteomicsDB" id="242388"/>
<dbReference type="EnsemblPlants" id="AT1G30570.1">
    <property type="protein sequence ID" value="AT1G30570.1"/>
    <property type="gene ID" value="AT1G30570"/>
</dbReference>
<dbReference type="GeneID" id="839937"/>
<dbReference type="Gramene" id="AT1G30570.1">
    <property type="protein sequence ID" value="AT1G30570.1"/>
    <property type="gene ID" value="AT1G30570"/>
</dbReference>
<dbReference type="KEGG" id="ath:AT1G30570"/>
<dbReference type="Araport" id="AT1G30570"/>
<dbReference type="TAIR" id="AT1G30570">
    <property type="gene designation" value="HERK2"/>
</dbReference>
<dbReference type="eggNOG" id="KOG1187">
    <property type="taxonomic scope" value="Eukaryota"/>
</dbReference>
<dbReference type="HOGENOM" id="CLU_000288_42_1_1"/>
<dbReference type="InParanoid" id="Q9SA72"/>
<dbReference type="OMA" id="LWRTWEV"/>
<dbReference type="PhylomeDB" id="Q9SA72"/>
<dbReference type="PRO" id="PR:Q9SA72"/>
<dbReference type="Proteomes" id="UP000006548">
    <property type="component" value="Chromosome 1"/>
</dbReference>
<dbReference type="ExpressionAtlas" id="Q9SA72">
    <property type="expression patterns" value="baseline and differential"/>
</dbReference>
<dbReference type="GO" id="GO:0005886">
    <property type="term" value="C:plasma membrane"/>
    <property type="evidence" value="ECO:0007669"/>
    <property type="project" value="UniProtKB-SubCell"/>
</dbReference>
<dbReference type="GO" id="GO:0005524">
    <property type="term" value="F:ATP binding"/>
    <property type="evidence" value="ECO:0007669"/>
    <property type="project" value="UniProtKB-KW"/>
</dbReference>
<dbReference type="GO" id="GO:0004674">
    <property type="term" value="F:protein serine/threonine kinase activity"/>
    <property type="evidence" value="ECO:0007669"/>
    <property type="project" value="UniProtKB-KW"/>
</dbReference>
<dbReference type="GO" id="GO:0009741">
    <property type="term" value="P:response to brassinosteroid"/>
    <property type="evidence" value="ECO:0000316"/>
    <property type="project" value="TAIR"/>
</dbReference>
<dbReference type="GO" id="GO:0009826">
    <property type="term" value="P:unidimensional cell growth"/>
    <property type="evidence" value="ECO:0000316"/>
    <property type="project" value="TAIR"/>
</dbReference>
<dbReference type="CDD" id="cd14066">
    <property type="entry name" value="STKc_IRAK"/>
    <property type="match status" value="1"/>
</dbReference>
<dbReference type="FunFam" id="1.10.510.10:FF:000058">
    <property type="entry name" value="Receptor-like protein kinase FERONIA"/>
    <property type="match status" value="1"/>
</dbReference>
<dbReference type="FunFam" id="2.60.120.430:FF:000001">
    <property type="entry name" value="Receptor-like protein kinase FERONIA"/>
    <property type="match status" value="1"/>
</dbReference>
<dbReference type="FunFam" id="3.30.200.20:FF:000039">
    <property type="entry name" value="receptor-like protein kinase FERONIA"/>
    <property type="match status" value="1"/>
</dbReference>
<dbReference type="Gene3D" id="2.60.120.430">
    <property type="entry name" value="Galactose-binding lectin"/>
    <property type="match status" value="2"/>
</dbReference>
<dbReference type="Gene3D" id="3.30.200.20">
    <property type="entry name" value="Phosphorylase Kinase, domain 1"/>
    <property type="match status" value="1"/>
</dbReference>
<dbReference type="Gene3D" id="1.10.510.10">
    <property type="entry name" value="Transferase(Phosphotransferase) domain 1"/>
    <property type="match status" value="1"/>
</dbReference>
<dbReference type="InterPro" id="IPR011009">
    <property type="entry name" value="Kinase-like_dom_sf"/>
</dbReference>
<dbReference type="InterPro" id="IPR051824">
    <property type="entry name" value="LRR_Rcpt-Like_S/T_Kinase"/>
</dbReference>
<dbReference type="InterPro" id="IPR024788">
    <property type="entry name" value="Malectin-like_Carb-bd_dom"/>
</dbReference>
<dbReference type="InterPro" id="IPR000719">
    <property type="entry name" value="Prot_kinase_dom"/>
</dbReference>
<dbReference type="InterPro" id="IPR017441">
    <property type="entry name" value="Protein_kinase_ATP_BS"/>
</dbReference>
<dbReference type="InterPro" id="IPR001245">
    <property type="entry name" value="Ser-Thr/Tyr_kinase_cat_dom"/>
</dbReference>
<dbReference type="InterPro" id="IPR008271">
    <property type="entry name" value="Ser/Thr_kinase_AS"/>
</dbReference>
<dbReference type="PANTHER" id="PTHR48006">
    <property type="entry name" value="LEUCINE-RICH REPEAT-CONTAINING PROTEIN DDB_G0281931-RELATED"/>
    <property type="match status" value="1"/>
</dbReference>
<dbReference type="PANTHER" id="PTHR48006:SF84">
    <property type="entry name" value="REPEAT TRANSMEMBRANE PROTEIN KINASE, PUTATIVE, EXPRESSED-RELATED"/>
    <property type="match status" value="1"/>
</dbReference>
<dbReference type="Pfam" id="PF12819">
    <property type="entry name" value="Malectin_like"/>
    <property type="match status" value="1"/>
</dbReference>
<dbReference type="Pfam" id="PF07714">
    <property type="entry name" value="PK_Tyr_Ser-Thr"/>
    <property type="match status" value="1"/>
</dbReference>
<dbReference type="SMART" id="SM00220">
    <property type="entry name" value="S_TKc"/>
    <property type="match status" value="1"/>
</dbReference>
<dbReference type="SUPFAM" id="SSF56112">
    <property type="entry name" value="Protein kinase-like (PK-like)"/>
    <property type="match status" value="1"/>
</dbReference>
<dbReference type="PROSITE" id="PS00107">
    <property type="entry name" value="PROTEIN_KINASE_ATP"/>
    <property type="match status" value="1"/>
</dbReference>
<dbReference type="PROSITE" id="PS50011">
    <property type="entry name" value="PROTEIN_KINASE_DOM"/>
    <property type="match status" value="1"/>
</dbReference>
<dbReference type="PROSITE" id="PS00108">
    <property type="entry name" value="PROTEIN_KINASE_ST"/>
    <property type="match status" value="1"/>
</dbReference>
<gene>
    <name type="ordered locus">At1g30570</name>
    <name type="ORF">T5I8.2</name>
</gene>
<organism>
    <name type="scientific">Arabidopsis thaliana</name>
    <name type="common">Mouse-ear cress</name>
    <dbReference type="NCBI Taxonomy" id="3702"/>
    <lineage>
        <taxon>Eukaryota</taxon>
        <taxon>Viridiplantae</taxon>
        <taxon>Streptophyta</taxon>
        <taxon>Embryophyta</taxon>
        <taxon>Tracheophyta</taxon>
        <taxon>Spermatophyta</taxon>
        <taxon>Magnoliopsida</taxon>
        <taxon>eudicotyledons</taxon>
        <taxon>Gunneridae</taxon>
        <taxon>Pentapetalae</taxon>
        <taxon>rosids</taxon>
        <taxon>malvids</taxon>
        <taxon>Brassicales</taxon>
        <taxon>Brassicaceae</taxon>
        <taxon>Camelineae</taxon>
        <taxon>Arabidopsis</taxon>
    </lineage>
</organism>
<protein>
    <recommendedName>
        <fullName>Probable receptor-like protein kinase At1g30570</fullName>
        <ecNumber>2.7.11.-</ecNumber>
    </recommendedName>
</protein>
<reference key="1">
    <citation type="journal article" date="2000" name="Nature">
        <title>Sequence and analysis of chromosome 1 of the plant Arabidopsis thaliana.</title>
        <authorList>
            <person name="Theologis A."/>
            <person name="Ecker J.R."/>
            <person name="Palm C.J."/>
            <person name="Federspiel N.A."/>
            <person name="Kaul S."/>
            <person name="White O."/>
            <person name="Alonso J."/>
            <person name="Altafi H."/>
            <person name="Araujo R."/>
            <person name="Bowman C.L."/>
            <person name="Brooks S.Y."/>
            <person name="Buehler E."/>
            <person name="Chan A."/>
            <person name="Chao Q."/>
            <person name="Chen H."/>
            <person name="Cheuk R.F."/>
            <person name="Chin C.W."/>
            <person name="Chung M.K."/>
            <person name="Conn L."/>
            <person name="Conway A.B."/>
            <person name="Conway A.R."/>
            <person name="Creasy T.H."/>
            <person name="Dewar K."/>
            <person name="Dunn P."/>
            <person name="Etgu P."/>
            <person name="Feldblyum T.V."/>
            <person name="Feng J.-D."/>
            <person name="Fong B."/>
            <person name="Fujii C.Y."/>
            <person name="Gill J.E."/>
            <person name="Goldsmith A.D."/>
            <person name="Haas B."/>
            <person name="Hansen N.F."/>
            <person name="Hughes B."/>
            <person name="Huizar L."/>
            <person name="Hunter J.L."/>
            <person name="Jenkins J."/>
            <person name="Johnson-Hopson C."/>
            <person name="Khan S."/>
            <person name="Khaykin E."/>
            <person name="Kim C.J."/>
            <person name="Koo H.L."/>
            <person name="Kremenetskaia I."/>
            <person name="Kurtz D.B."/>
            <person name="Kwan A."/>
            <person name="Lam B."/>
            <person name="Langin-Hooper S."/>
            <person name="Lee A."/>
            <person name="Lee J.M."/>
            <person name="Lenz C.A."/>
            <person name="Li J.H."/>
            <person name="Li Y.-P."/>
            <person name="Lin X."/>
            <person name="Liu S.X."/>
            <person name="Liu Z.A."/>
            <person name="Luros J.S."/>
            <person name="Maiti R."/>
            <person name="Marziali A."/>
            <person name="Militscher J."/>
            <person name="Miranda M."/>
            <person name="Nguyen M."/>
            <person name="Nierman W.C."/>
            <person name="Osborne B.I."/>
            <person name="Pai G."/>
            <person name="Peterson J."/>
            <person name="Pham P.K."/>
            <person name="Rizzo M."/>
            <person name="Rooney T."/>
            <person name="Rowley D."/>
            <person name="Sakano H."/>
            <person name="Salzberg S.L."/>
            <person name="Schwartz J.R."/>
            <person name="Shinn P."/>
            <person name="Southwick A.M."/>
            <person name="Sun H."/>
            <person name="Tallon L.J."/>
            <person name="Tambunga G."/>
            <person name="Toriumi M.J."/>
            <person name="Town C.D."/>
            <person name="Utterback T."/>
            <person name="Van Aken S."/>
            <person name="Vaysberg M."/>
            <person name="Vysotskaia V.S."/>
            <person name="Walker M."/>
            <person name="Wu D."/>
            <person name="Yu G."/>
            <person name="Fraser C.M."/>
            <person name="Venter J.C."/>
            <person name="Davis R.W."/>
        </authorList>
    </citation>
    <scope>NUCLEOTIDE SEQUENCE [LARGE SCALE GENOMIC DNA]</scope>
    <source>
        <strain>cv. Columbia</strain>
    </source>
</reference>
<reference key="2">
    <citation type="journal article" date="2017" name="Plant J.">
        <title>Araport11: a complete reannotation of the Arabidopsis thaliana reference genome.</title>
        <authorList>
            <person name="Cheng C.Y."/>
            <person name="Krishnakumar V."/>
            <person name="Chan A.P."/>
            <person name="Thibaud-Nissen F."/>
            <person name="Schobel S."/>
            <person name="Town C.D."/>
        </authorList>
    </citation>
    <scope>GENOME REANNOTATION</scope>
    <source>
        <strain>cv. Columbia</strain>
    </source>
</reference>
<reference key="3">
    <citation type="journal article" date="2009" name="Mol. Plant">
        <title>Diverse transcriptional programs associated with environmental stress and hormones in the Arabidopsis receptor-like kinase gene family.</title>
        <authorList>
            <person name="Chae L."/>
            <person name="Sudat S."/>
            <person name="Dudoit S."/>
            <person name="Zhu T."/>
            <person name="Luan S."/>
        </authorList>
    </citation>
    <scope>GENE FAMILY</scope>
</reference>
<proteinExistence type="inferred from homology"/>
<accession>Q9SA72</accession>
<comment type="subcellular location">
    <subcellularLocation>
        <location evidence="1">Cell membrane</location>
        <topology evidence="1">Single-pass type I membrane protein</topology>
    </subcellularLocation>
</comment>
<comment type="similarity">
    <text evidence="3">Belongs to the protein kinase superfamily. Ser/Thr protein kinase family.</text>
</comment>
<feature type="signal peptide" evidence="2">
    <location>
        <begin position="1"/>
        <end position="28"/>
    </location>
</feature>
<feature type="chain" id="PRO_0000386551" description="Probable receptor-like protein kinase At1g30570">
    <location>
        <begin position="29"/>
        <end position="849"/>
    </location>
</feature>
<feature type="topological domain" description="Extracellular" evidence="2">
    <location>
        <begin position="29"/>
        <end position="429"/>
    </location>
</feature>
<feature type="transmembrane region" description="Helical" evidence="2">
    <location>
        <begin position="430"/>
        <end position="450"/>
    </location>
</feature>
<feature type="topological domain" description="Cytoplasmic" evidence="2">
    <location>
        <begin position="451"/>
        <end position="849"/>
    </location>
</feature>
<feature type="domain" description="Protein kinase" evidence="3">
    <location>
        <begin position="520"/>
        <end position="793"/>
    </location>
</feature>
<feature type="region of interest" description="Disordered" evidence="5">
    <location>
        <begin position="810"/>
        <end position="849"/>
    </location>
</feature>
<feature type="compositionally biased region" description="Polar residues" evidence="5">
    <location>
        <begin position="827"/>
        <end position="849"/>
    </location>
</feature>
<feature type="active site" description="Proton acceptor" evidence="3 4">
    <location>
        <position position="644"/>
    </location>
</feature>
<feature type="binding site" evidence="3">
    <location>
        <begin position="526"/>
        <end position="534"/>
    </location>
    <ligand>
        <name>ATP</name>
        <dbReference type="ChEBI" id="CHEBI:30616"/>
    </ligand>
</feature>
<feature type="binding site" evidence="3">
    <location>
        <position position="548"/>
    </location>
    <ligand>
        <name>ATP</name>
        <dbReference type="ChEBI" id="CHEBI:30616"/>
    </ligand>
</feature>
<feature type="glycosylation site" description="N-linked (GlcNAc...) asparagine" evidence="2">
    <location>
        <position position="40"/>
    </location>
</feature>
<feature type="glycosylation site" description="N-linked (GlcNAc...) asparagine" evidence="2">
    <location>
        <position position="57"/>
    </location>
</feature>
<feature type="glycosylation site" description="N-linked (GlcNAc...) asparagine" evidence="2">
    <location>
        <position position="94"/>
    </location>
</feature>
<feature type="glycosylation site" description="N-linked (GlcNAc...) asparagine" evidence="2">
    <location>
        <position position="122"/>
    </location>
</feature>
<feature type="glycosylation site" description="N-linked (GlcNAc...) asparagine" evidence="2">
    <location>
        <position position="158"/>
    </location>
</feature>
<feature type="glycosylation site" description="N-linked (GlcNAc...) asparagine" evidence="2">
    <location>
        <position position="268"/>
    </location>
</feature>
<feature type="glycosylation site" description="N-linked (GlcNAc...) asparagine" evidence="2">
    <location>
        <position position="271"/>
    </location>
</feature>
<feature type="glycosylation site" description="N-linked (GlcNAc...) asparagine" evidence="2">
    <location>
        <position position="305"/>
    </location>
</feature>
<feature type="glycosylation site" description="N-linked (GlcNAc...) asparagine" evidence="2">
    <location>
        <position position="343"/>
    </location>
</feature>